<sequence length="267" mass="30425">MLSHAELKQGFHYFMMGWHLITQKGLRRFVIMPILLNIVLLSGLFWLFITQIEKMIGMLMLSIPDWLSWLSSILLIFAILMILVLFYFVFTTLSGFIAAPFNGLLAEKVEKMLTGENLVEGSVWDFMKDIPRMLGREWQKLVYSLPKLIILFLLGFVPVLGQSVIPIIVTLFTAWMMAIQYCDYPFDNHKVPFFVMKAELAEKRALSLSFGGLVMLCTFIPLVNLVVIPVAVCGATAMWVTHFRDHLAMKPLNQEGVSRVSTVSIVK</sequence>
<dbReference type="EMBL" id="AE004439">
    <property type="protein sequence ID" value="AAK03778.1"/>
    <property type="molecule type" value="Genomic_DNA"/>
</dbReference>
<dbReference type="RefSeq" id="WP_010907292.1">
    <property type="nucleotide sequence ID" value="NC_002663.1"/>
</dbReference>
<dbReference type="SMR" id="Q9CKC9"/>
<dbReference type="STRING" id="272843.PM1694"/>
<dbReference type="EnsemblBacteria" id="AAK03778">
    <property type="protein sequence ID" value="AAK03778"/>
    <property type="gene ID" value="PM1694"/>
</dbReference>
<dbReference type="KEGG" id="pmu:PM1694"/>
<dbReference type="PATRIC" id="fig|272843.6.peg.1715"/>
<dbReference type="HOGENOM" id="CLU_070331_1_0_6"/>
<dbReference type="OrthoDB" id="5292355at2"/>
<dbReference type="Proteomes" id="UP000000809">
    <property type="component" value="Chromosome"/>
</dbReference>
<dbReference type="GO" id="GO:0005886">
    <property type="term" value="C:plasma membrane"/>
    <property type="evidence" value="ECO:0007669"/>
    <property type="project" value="UniProtKB-SubCell"/>
</dbReference>
<dbReference type="GO" id="GO:0009675">
    <property type="term" value="F:high-affinity sulfate:proton symporter activity"/>
    <property type="evidence" value="ECO:0007669"/>
    <property type="project" value="TreeGrafter"/>
</dbReference>
<dbReference type="GO" id="GO:0019344">
    <property type="term" value="P:cysteine biosynthetic process"/>
    <property type="evidence" value="ECO:0007669"/>
    <property type="project" value="UniProtKB-UniRule"/>
</dbReference>
<dbReference type="GO" id="GO:0000103">
    <property type="term" value="P:sulfate assimilation"/>
    <property type="evidence" value="ECO:0007669"/>
    <property type="project" value="InterPro"/>
</dbReference>
<dbReference type="HAMAP" id="MF_00468">
    <property type="entry name" value="CysZ"/>
    <property type="match status" value="1"/>
</dbReference>
<dbReference type="InterPro" id="IPR050480">
    <property type="entry name" value="CysZ_sulfate_transptr"/>
</dbReference>
<dbReference type="InterPro" id="IPR022985">
    <property type="entry name" value="Sulfate_CysZ"/>
</dbReference>
<dbReference type="NCBIfam" id="NF003433">
    <property type="entry name" value="PRK04949.1"/>
    <property type="match status" value="1"/>
</dbReference>
<dbReference type="PANTHER" id="PTHR37468">
    <property type="entry name" value="SULFATE TRANSPORTER CYSZ"/>
    <property type="match status" value="1"/>
</dbReference>
<dbReference type="PANTHER" id="PTHR37468:SF1">
    <property type="entry name" value="SULFATE TRANSPORTER CYSZ"/>
    <property type="match status" value="1"/>
</dbReference>
<dbReference type="Pfam" id="PF07264">
    <property type="entry name" value="EI24"/>
    <property type="match status" value="1"/>
</dbReference>
<evidence type="ECO:0000255" key="1">
    <source>
        <dbReference type="HAMAP-Rule" id="MF_00468"/>
    </source>
</evidence>
<protein>
    <recommendedName>
        <fullName evidence="1">Sulfate transporter CysZ</fullName>
    </recommendedName>
</protein>
<name>CYSZ_PASMU</name>
<organism>
    <name type="scientific">Pasteurella multocida (strain Pm70)</name>
    <dbReference type="NCBI Taxonomy" id="272843"/>
    <lineage>
        <taxon>Bacteria</taxon>
        <taxon>Pseudomonadati</taxon>
        <taxon>Pseudomonadota</taxon>
        <taxon>Gammaproteobacteria</taxon>
        <taxon>Pasteurellales</taxon>
        <taxon>Pasteurellaceae</taxon>
        <taxon>Pasteurella</taxon>
    </lineage>
</organism>
<proteinExistence type="inferred from homology"/>
<accession>Q9CKC9</accession>
<feature type="chain" id="PRO_0000204343" description="Sulfate transporter CysZ">
    <location>
        <begin position="1"/>
        <end position="267"/>
    </location>
</feature>
<feature type="transmembrane region" description="Helical" evidence="1">
    <location>
        <begin position="29"/>
        <end position="49"/>
    </location>
</feature>
<feature type="transmembrane region" description="Helical" evidence="1">
    <location>
        <begin position="73"/>
        <end position="93"/>
    </location>
</feature>
<feature type="transmembrane region" description="Helical" evidence="1">
    <location>
        <begin position="149"/>
        <end position="169"/>
    </location>
</feature>
<feature type="transmembrane region" description="Helical" evidence="1">
    <location>
        <begin position="212"/>
        <end position="232"/>
    </location>
</feature>
<comment type="function">
    <text evidence="1">High affinity, high specificity proton-dependent sulfate transporter, which mediates sulfate uptake. Provides the sulfur source for the cysteine synthesis pathway.</text>
</comment>
<comment type="subcellular location">
    <subcellularLocation>
        <location evidence="1">Cell inner membrane</location>
        <topology evidence="1">Multi-pass membrane protein</topology>
    </subcellularLocation>
</comment>
<comment type="similarity">
    <text evidence="1">Belongs to the CysZ family.</text>
</comment>
<gene>
    <name evidence="1" type="primary">cysZ</name>
    <name type="ordered locus">PM1694</name>
</gene>
<keyword id="KW-0028">Amino-acid biosynthesis</keyword>
<keyword id="KW-0997">Cell inner membrane</keyword>
<keyword id="KW-1003">Cell membrane</keyword>
<keyword id="KW-0198">Cysteine biosynthesis</keyword>
<keyword id="KW-0472">Membrane</keyword>
<keyword id="KW-1185">Reference proteome</keyword>
<keyword id="KW-0764">Sulfate transport</keyword>
<keyword id="KW-0812">Transmembrane</keyword>
<keyword id="KW-1133">Transmembrane helix</keyword>
<keyword id="KW-0813">Transport</keyword>
<reference key="1">
    <citation type="journal article" date="2001" name="Proc. Natl. Acad. Sci. U.S.A.">
        <title>Complete genomic sequence of Pasteurella multocida Pm70.</title>
        <authorList>
            <person name="May B.J."/>
            <person name="Zhang Q."/>
            <person name="Li L.L."/>
            <person name="Paustian M.L."/>
            <person name="Whittam T.S."/>
            <person name="Kapur V."/>
        </authorList>
    </citation>
    <scope>NUCLEOTIDE SEQUENCE [LARGE SCALE GENOMIC DNA]</scope>
    <source>
        <strain>Pm70</strain>
    </source>
</reference>